<proteinExistence type="inferred from homology"/>
<feature type="chain" id="PRO_1000212395" description="Probable inosine/xanthosine triphosphatase">
    <location>
        <begin position="1"/>
        <end position="176"/>
    </location>
</feature>
<feature type="binding site" evidence="1">
    <location>
        <position position="36"/>
    </location>
    <ligand>
        <name>Mg(2+)</name>
        <dbReference type="ChEBI" id="CHEBI:18420"/>
    </ligand>
</feature>
<protein>
    <recommendedName>
        <fullName evidence="1">Probable inosine/xanthosine triphosphatase</fullName>
        <shortName evidence="1">ITPase/XTPase</shortName>
        <ecNumber evidence="1">3.6.1.73</ecNumber>
    </recommendedName>
    <alternativeName>
        <fullName evidence="1">Non-canonical purine NTP phosphatase</fullName>
    </alternativeName>
    <alternativeName>
        <fullName evidence="1">Non-standard purine NTP phosphatase</fullName>
    </alternativeName>
    <alternativeName>
        <fullName evidence="1">Nucleoside-triphosphate phosphatase</fullName>
        <shortName evidence="1">NTPase</shortName>
    </alternativeName>
</protein>
<name>NCPP_SACI1</name>
<evidence type="ECO:0000255" key="1">
    <source>
        <dbReference type="HAMAP-Rule" id="MF_00648"/>
    </source>
</evidence>
<sequence>MVTIALGSKNPVKINATKEALDVLKLNWDLIGIEVDSGVDKQPFCDQTYVGARNRALNVIRVTNADIGLGIEGGVCNVYGKFIANAVVYVITKEGLENFAISSSFTLPSSMVSLILQGKELGEASDIIFKTNNSKTKEGAIGLLTNNVINRKMLYVQPIVLALYPIYNTMINNTPF</sequence>
<dbReference type="EC" id="3.6.1.73" evidence="1"/>
<dbReference type="EMBL" id="CP001404">
    <property type="protein sequence ID" value="ACP47247.1"/>
    <property type="molecule type" value="Genomic_DNA"/>
</dbReference>
<dbReference type="RefSeq" id="WP_012712728.1">
    <property type="nucleotide sequence ID" value="NC_012623.1"/>
</dbReference>
<dbReference type="SMR" id="C3NJ80"/>
<dbReference type="GeneID" id="7811421"/>
<dbReference type="KEGG" id="sin:YN1551_0048"/>
<dbReference type="HOGENOM" id="CLU_087417_0_0_2"/>
<dbReference type="Proteomes" id="UP000006818">
    <property type="component" value="Chromosome"/>
</dbReference>
<dbReference type="GO" id="GO:0103023">
    <property type="term" value="F:ITPase activity"/>
    <property type="evidence" value="ECO:0007669"/>
    <property type="project" value="UniProtKB-EC"/>
</dbReference>
<dbReference type="GO" id="GO:0046872">
    <property type="term" value="F:metal ion binding"/>
    <property type="evidence" value="ECO:0007669"/>
    <property type="project" value="UniProtKB-KW"/>
</dbReference>
<dbReference type="GO" id="GO:0000166">
    <property type="term" value="F:nucleotide binding"/>
    <property type="evidence" value="ECO:0007669"/>
    <property type="project" value="UniProtKB-KW"/>
</dbReference>
<dbReference type="GO" id="GO:0017111">
    <property type="term" value="F:ribonucleoside triphosphate phosphatase activity"/>
    <property type="evidence" value="ECO:0000250"/>
    <property type="project" value="UniProtKB"/>
</dbReference>
<dbReference type="GO" id="GO:0009117">
    <property type="term" value="P:nucleotide metabolic process"/>
    <property type="evidence" value="ECO:0007669"/>
    <property type="project" value="UniProtKB-KW"/>
</dbReference>
<dbReference type="GO" id="GO:0006772">
    <property type="term" value="P:thiamine metabolic process"/>
    <property type="evidence" value="ECO:0007669"/>
    <property type="project" value="TreeGrafter"/>
</dbReference>
<dbReference type="FunFam" id="3.90.950.10:FF:000002">
    <property type="entry name" value="Inosine/xanthosine triphosphatase"/>
    <property type="match status" value="1"/>
</dbReference>
<dbReference type="Gene3D" id="3.90.950.10">
    <property type="match status" value="1"/>
</dbReference>
<dbReference type="HAMAP" id="MF_00648">
    <property type="entry name" value="Non_canon_purine_NTPase_YjjX"/>
    <property type="match status" value="1"/>
</dbReference>
<dbReference type="InterPro" id="IPR029001">
    <property type="entry name" value="ITPase-like_fam"/>
</dbReference>
<dbReference type="InterPro" id="IPR002786">
    <property type="entry name" value="Non_canon_purine_NTPase"/>
</dbReference>
<dbReference type="InterPro" id="IPR026533">
    <property type="entry name" value="NTPase/PRRC1"/>
</dbReference>
<dbReference type="InterPro" id="IPR050299">
    <property type="entry name" value="YjjX_NTPase"/>
</dbReference>
<dbReference type="PANTHER" id="PTHR34699">
    <property type="match status" value="1"/>
</dbReference>
<dbReference type="PANTHER" id="PTHR34699:SF2">
    <property type="entry name" value="NON-CANONICAL PURINE NTP PHOSPHATASE_PRRC1 DOMAIN-CONTAINING PROTEIN"/>
    <property type="match status" value="1"/>
</dbReference>
<dbReference type="Pfam" id="PF01931">
    <property type="entry name" value="NTPase_I-T"/>
    <property type="match status" value="1"/>
</dbReference>
<dbReference type="SUPFAM" id="SSF52972">
    <property type="entry name" value="ITPase-like"/>
    <property type="match status" value="1"/>
</dbReference>
<accession>C3NJ80</accession>
<reference key="1">
    <citation type="journal article" date="2009" name="Proc. Natl. Acad. Sci. U.S.A.">
        <title>Biogeography of the Sulfolobus islandicus pan-genome.</title>
        <authorList>
            <person name="Reno M.L."/>
            <person name="Held N.L."/>
            <person name="Fields C.J."/>
            <person name="Burke P.V."/>
            <person name="Whitaker R.J."/>
        </authorList>
    </citation>
    <scope>NUCLEOTIDE SEQUENCE [LARGE SCALE GENOMIC DNA]</scope>
    <source>
        <strain>Y.N.15.51 / Yellowstone #2</strain>
    </source>
</reference>
<keyword id="KW-0378">Hydrolase</keyword>
<keyword id="KW-0460">Magnesium</keyword>
<keyword id="KW-0464">Manganese</keyword>
<keyword id="KW-0479">Metal-binding</keyword>
<keyword id="KW-0546">Nucleotide metabolism</keyword>
<keyword id="KW-0547">Nucleotide-binding</keyword>
<organism>
    <name type="scientific">Saccharolobus islandicus (strain Y.N.15.51 / Yellowstone #2)</name>
    <name type="common">Sulfolobus islandicus</name>
    <dbReference type="NCBI Taxonomy" id="419942"/>
    <lineage>
        <taxon>Archaea</taxon>
        <taxon>Thermoproteota</taxon>
        <taxon>Thermoprotei</taxon>
        <taxon>Sulfolobales</taxon>
        <taxon>Sulfolobaceae</taxon>
        <taxon>Saccharolobus</taxon>
    </lineage>
</organism>
<gene>
    <name type="ordered locus">YN1551_0048</name>
</gene>
<comment type="function">
    <text evidence="1">Phosphatase that hydrolyzes non-canonical purine nucleotides such as XTP and ITP to their respective diphosphate derivatives. Probably excludes non-canonical purines from DNA/RNA precursor pool, thus preventing their incorporation into DNA/RNA and avoiding chromosomal lesions.</text>
</comment>
<comment type="catalytic activity">
    <reaction evidence="1">
        <text>XTP + H2O = XDP + phosphate + H(+)</text>
        <dbReference type="Rhea" id="RHEA:28406"/>
        <dbReference type="ChEBI" id="CHEBI:15377"/>
        <dbReference type="ChEBI" id="CHEBI:15378"/>
        <dbReference type="ChEBI" id="CHEBI:43474"/>
        <dbReference type="ChEBI" id="CHEBI:59884"/>
        <dbReference type="ChEBI" id="CHEBI:61314"/>
        <dbReference type="EC" id="3.6.1.73"/>
    </reaction>
</comment>
<comment type="catalytic activity">
    <reaction evidence="1">
        <text>ITP + H2O = IDP + phosphate + H(+)</text>
        <dbReference type="Rhea" id="RHEA:28330"/>
        <dbReference type="ChEBI" id="CHEBI:15377"/>
        <dbReference type="ChEBI" id="CHEBI:15378"/>
        <dbReference type="ChEBI" id="CHEBI:43474"/>
        <dbReference type="ChEBI" id="CHEBI:58280"/>
        <dbReference type="ChEBI" id="CHEBI:61402"/>
        <dbReference type="EC" id="3.6.1.73"/>
    </reaction>
</comment>
<comment type="cofactor">
    <cofactor evidence="1">
        <name>Mg(2+)</name>
        <dbReference type="ChEBI" id="CHEBI:18420"/>
    </cofactor>
    <cofactor evidence="1">
        <name>Mn(2+)</name>
        <dbReference type="ChEBI" id="CHEBI:29035"/>
    </cofactor>
    <text evidence="1">Binds 1 divalent metal cation per subunit; can use either Mg(2+) or Mn(2+).</text>
</comment>
<comment type="subunit">
    <text evidence="1">Homodimer.</text>
</comment>
<comment type="similarity">
    <text evidence="1">Belongs to the YjjX NTPase family.</text>
</comment>